<proteinExistence type="inferred from homology"/>
<name>RACA_BACC3</name>
<sequence>MEYKTPFIAKKLGVSPKAVVRIAQQLNLTIEKNKYGHFIFTQDDLDQMLEYHRSQIEQSQNTHPTQKTSSNDVEELKTQVNTIVQNISSHDFEQLAAQLNTITRRLDRMEEQMQDKANDVVTYQLLQHRREMEEMLERIQKLEAGLKKEEPIYITPDTKPTYEREKKPKRRKMIFSIFGL</sequence>
<gene>
    <name evidence="1" type="primary">racA</name>
    <name type="ordered locus">BCA_2368</name>
</gene>
<accession>C1ETF1</accession>
<protein>
    <recommendedName>
        <fullName evidence="1">Chromosome-anchoring protein RacA</fullName>
    </recommendedName>
</protein>
<organism>
    <name type="scientific">Bacillus cereus (strain 03BB102)</name>
    <dbReference type="NCBI Taxonomy" id="572264"/>
    <lineage>
        <taxon>Bacteria</taxon>
        <taxon>Bacillati</taxon>
        <taxon>Bacillota</taxon>
        <taxon>Bacilli</taxon>
        <taxon>Bacillales</taxon>
        <taxon>Bacillaceae</taxon>
        <taxon>Bacillus</taxon>
        <taxon>Bacillus cereus group</taxon>
    </lineage>
</organism>
<evidence type="ECO:0000255" key="1">
    <source>
        <dbReference type="HAMAP-Rule" id="MF_01170"/>
    </source>
</evidence>
<keyword id="KW-0131">Cell cycle</keyword>
<keyword id="KW-0132">Cell division</keyword>
<keyword id="KW-0159">Chromosome partition</keyword>
<keyword id="KW-0175">Coiled coil</keyword>
<keyword id="KW-0963">Cytoplasm</keyword>
<keyword id="KW-0238">DNA-binding</keyword>
<keyword id="KW-0749">Sporulation</keyword>
<dbReference type="EMBL" id="CP001407">
    <property type="protein sequence ID" value="ACO26359.1"/>
    <property type="molecule type" value="Genomic_DNA"/>
</dbReference>
<dbReference type="RefSeq" id="WP_000456010.1">
    <property type="nucleotide sequence ID" value="NZ_CP009318.1"/>
</dbReference>
<dbReference type="SMR" id="C1ETF1"/>
<dbReference type="GeneID" id="45022176"/>
<dbReference type="KEGG" id="bcx:BCA_2368"/>
<dbReference type="PATRIC" id="fig|572264.18.peg.2314"/>
<dbReference type="Proteomes" id="UP000002210">
    <property type="component" value="Chromosome"/>
</dbReference>
<dbReference type="GO" id="GO:0005737">
    <property type="term" value="C:cytoplasm"/>
    <property type="evidence" value="ECO:0007669"/>
    <property type="project" value="UniProtKB-SubCell"/>
</dbReference>
<dbReference type="GO" id="GO:0003690">
    <property type="term" value="F:double-stranded DNA binding"/>
    <property type="evidence" value="ECO:0007669"/>
    <property type="project" value="UniProtKB-UniRule"/>
</dbReference>
<dbReference type="GO" id="GO:0008356">
    <property type="term" value="P:asymmetric cell division"/>
    <property type="evidence" value="ECO:0007669"/>
    <property type="project" value="UniProtKB-UniRule"/>
</dbReference>
<dbReference type="GO" id="GO:0030261">
    <property type="term" value="P:chromosome condensation"/>
    <property type="evidence" value="ECO:0007669"/>
    <property type="project" value="UniProtKB-UniRule"/>
</dbReference>
<dbReference type="GO" id="GO:0007059">
    <property type="term" value="P:chromosome segregation"/>
    <property type="evidence" value="ECO:0007669"/>
    <property type="project" value="UniProtKB-UniRule"/>
</dbReference>
<dbReference type="GO" id="GO:0030435">
    <property type="term" value="P:sporulation resulting in formation of a cellular spore"/>
    <property type="evidence" value="ECO:0007669"/>
    <property type="project" value="UniProtKB-UniRule"/>
</dbReference>
<dbReference type="Gene3D" id="1.10.1660.10">
    <property type="match status" value="1"/>
</dbReference>
<dbReference type="HAMAP" id="MF_01170">
    <property type="entry name" value="RacA"/>
    <property type="match status" value="1"/>
</dbReference>
<dbReference type="InterPro" id="IPR023522">
    <property type="entry name" value="Chrosome_anchoring_RacA"/>
</dbReference>
<dbReference type="NCBIfam" id="NF009646">
    <property type="entry name" value="PRK13182.1-1"/>
    <property type="match status" value="1"/>
</dbReference>
<dbReference type="SUPFAM" id="SSF58064">
    <property type="entry name" value="Influenza hemagglutinin (stalk)"/>
    <property type="match status" value="1"/>
</dbReference>
<comment type="function">
    <text evidence="1">Required for the formation of axial filaments and for anchoring the origin regions at the cell poles in sporulating cells, thus ensuring proper chromosome segregation in the prespore. Binds in a dispersed manner throughout the chromosome but preferentially to sites clustered in the origin portion of the chromosome, causing condensation of the chromosome and its remodeling into an elongated, anchored structure.</text>
</comment>
<comment type="subcellular location">
    <subcellularLocation>
        <location evidence="1">Cytoplasm</location>
    </subcellularLocation>
    <text evidence="1">Localizes to cell poles and nucleoid.</text>
</comment>
<comment type="similarity">
    <text evidence="1">Belongs to the RacA family.</text>
</comment>
<reference key="1">
    <citation type="submission" date="2009-02" db="EMBL/GenBank/DDBJ databases">
        <title>Genome sequence of Bacillus cereus 03BB102.</title>
        <authorList>
            <person name="Dodson R.J."/>
            <person name="Jackson P."/>
            <person name="Munk A.C."/>
            <person name="Brettin T."/>
            <person name="Bruce D."/>
            <person name="Detter C."/>
            <person name="Tapia R."/>
            <person name="Han C."/>
            <person name="Sutton G."/>
            <person name="Sims D."/>
        </authorList>
    </citation>
    <scope>NUCLEOTIDE SEQUENCE [LARGE SCALE GENOMIC DNA]</scope>
    <source>
        <strain>03BB102</strain>
    </source>
</reference>
<feature type="chain" id="PRO_1000164363" description="Chromosome-anchoring protein RacA">
    <location>
        <begin position="1"/>
        <end position="180"/>
    </location>
</feature>
<feature type="DNA-binding region" description="H-T-H motif" evidence="1">
    <location>
        <begin position="5"/>
        <end position="25"/>
    </location>
</feature>
<feature type="coiled-coil region" evidence="1">
    <location>
        <begin position="90"/>
        <end position="150"/>
    </location>
</feature>